<keyword id="KW-1003">Cell membrane</keyword>
<keyword id="KW-0963">Cytoplasm</keyword>
<keyword id="KW-0342">GTP-binding</keyword>
<keyword id="KW-0472">Membrane</keyword>
<keyword id="KW-0547">Nucleotide-binding</keyword>
<keyword id="KW-1185">Reference proteome</keyword>
<keyword id="KW-0690">Ribosome biogenesis</keyword>
<keyword id="KW-0694">RNA-binding</keyword>
<keyword id="KW-0699">rRNA-binding</keyword>
<protein>
    <recommendedName>
        <fullName evidence="1">GTPase Era</fullName>
    </recommendedName>
</protein>
<comment type="function">
    <text evidence="1">An essential GTPase that binds both GDP and GTP, with rapid nucleotide exchange. Plays a role in 16S rRNA processing and 30S ribosomal subunit biogenesis and possibly also in cell cycle regulation and energy metabolism.</text>
</comment>
<comment type="subunit">
    <text evidence="1">Monomer.</text>
</comment>
<comment type="subcellular location">
    <subcellularLocation>
        <location>Cytoplasm</location>
    </subcellularLocation>
    <subcellularLocation>
        <location evidence="1">Cell membrane</location>
        <topology evidence="1">Peripheral membrane protein</topology>
    </subcellularLocation>
</comment>
<comment type="similarity">
    <text evidence="1 2">Belongs to the TRAFAC class TrmE-Era-EngA-EngB-Septin-like GTPase superfamily. Era GTPase family.</text>
</comment>
<comment type="sequence caution" evidence="3">
    <conflict type="erroneous initiation">
        <sequence resource="EMBL-CDS" id="CAB66217"/>
    </conflict>
    <text>Extended N-terminus.</text>
</comment>
<sequence>MSVRTQSSEEPAETVHRAGFACFVGRPNAGKSTLTNALVGQKVAITSNRPQTTRHTVRGIVHREDAQLILVDTPGLHKPRTLLGERLNDVVRTTWAEVDVIGFCLPANEKLGPGDRFIAKELAGIRKTPKVAIVTKTDLVDSKTLAEQLIAIDQLGKELGIAWAEIVPVSATANQQVDLLADLLTPLLPEGPALYPEGDLTDEPEQVMVAELIREAALEGVRDELPHSIAVVVEEMLPREDRPADKPLLDIHANVYIERPSQKGIIIGPKGKRLKDVGIKSRTQIEALLGTPVFLDLHVKVAKDWQRDPKQLRRLGF</sequence>
<name>ERA_STRCO</name>
<evidence type="ECO:0000255" key="1">
    <source>
        <dbReference type="HAMAP-Rule" id="MF_00367"/>
    </source>
</evidence>
<evidence type="ECO:0000255" key="2">
    <source>
        <dbReference type="PROSITE-ProRule" id="PRU01050"/>
    </source>
</evidence>
<evidence type="ECO:0000305" key="3"/>
<dbReference type="EMBL" id="AL939113">
    <property type="protein sequence ID" value="CAB66217.1"/>
    <property type="status" value="ALT_INIT"/>
    <property type="molecule type" value="Genomic_DNA"/>
</dbReference>
<dbReference type="RefSeq" id="NP_626777.1">
    <property type="nucleotide sequence ID" value="NC_003888.3"/>
</dbReference>
<dbReference type="RefSeq" id="WP_016326176.1">
    <property type="nucleotide sequence ID" value="NZ_VNID01000001.1"/>
</dbReference>
<dbReference type="SMR" id="Q9RDF2"/>
<dbReference type="FunCoup" id="Q9RDF2">
    <property type="interactions" value="393"/>
</dbReference>
<dbReference type="STRING" id="100226.gene:17760141"/>
<dbReference type="PaxDb" id="100226-SCO2539"/>
<dbReference type="GeneID" id="91386465"/>
<dbReference type="KEGG" id="sco:SCO2539"/>
<dbReference type="PATRIC" id="fig|100226.15.peg.2584"/>
<dbReference type="eggNOG" id="COG1159">
    <property type="taxonomic scope" value="Bacteria"/>
</dbReference>
<dbReference type="HOGENOM" id="CLU_038009_0_2_11"/>
<dbReference type="InParanoid" id="Q9RDF2"/>
<dbReference type="OrthoDB" id="9805918at2"/>
<dbReference type="PhylomeDB" id="Q9RDF2"/>
<dbReference type="Proteomes" id="UP000001973">
    <property type="component" value="Chromosome"/>
</dbReference>
<dbReference type="GO" id="GO:0005829">
    <property type="term" value="C:cytosol"/>
    <property type="evidence" value="ECO:0000318"/>
    <property type="project" value="GO_Central"/>
</dbReference>
<dbReference type="GO" id="GO:0005886">
    <property type="term" value="C:plasma membrane"/>
    <property type="evidence" value="ECO:0007669"/>
    <property type="project" value="UniProtKB-SubCell"/>
</dbReference>
<dbReference type="GO" id="GO:0005525">
    <property type="term" value="F:GTP binding"/>
    <property type="evidence" value="ECO:0007669"/>
    <property type="project" value="UniProtKB-UniRule"/>
</dbReference>
<dbReference type="GO" id="GO:0003924">
    <property type="term" value="F:GTPase activity"/>
    <property type="evidence" value="ECO:0007669"/>
    <property type="project" value="UniProtKB-UniRule"/>
</dbReference>
<dbReference type="GO" id="GO:0043024">
    <property type="term" value="F:ribosomal small subunit binding"/>
    <property type="evidence" value="ECO:0000318"/>
    <property type="project" value="GO_Central"/>
</dbReference>
<dbReference type="GO" id="GO:0019843">
    <property type="term" value="F:rRNA binding"/>
    <property type="evidence" value="ECO:0000318"/>
    <property type="project" value="GO_Central"/>
</dbReference>
<dbReference type="GO" id="GO:0070181">
    <property type="term" value="F:small ribosomal subunit rRNA binding"/>
    <property type="evidence" value="ECO:0007669"/>
    <property type="project" value="UniProtKB-UniRule"/>
</dbReference>
<dbReference type="GO" id="GO:0000028">
    <property type="term" value="P:ribosomal small subunit assembly"/>
    <property type="evidence" value="ECO:0000318"/>
    <property type="project" value="GO_Central"/>
</dbReference>
<dbReference type="CDD" id="cd04163">
    <property type="entry name" value="Era"/>
    <property type="match status" value="1"/>
</dbReference>
<dbReference type="CDD" id="cd22534">
    <property type="entry name" value="KH-II_Era"/>
    <property type="match status" value="1"/>
</dbReference>
<dbReference type="FunFam" id="3.30.300.20:FF:000003">
    <property type="entry name" value="GTPase Era"/>
    <property type="match status" value="1"/>
</dbReference>
<dbReference type="FunFam" id="3.40.50.300:FF:000094">
    <property type="entry name" value="GTPase Era"/>
    <property type="match status" value="1"/>
</dbReference>
<dbReference type="Gene3D" id="3.30.300.20">
    <property type="match status" value="1"/>
</dbReference>
<dbReference type="Gene3D" id="3.40.50.300">
    <property type="entry name" value="P-loop containing nucleotide triphosphate hydrolases"/>
    <property type="match status" value="1"/>
</dbReference>
<dbReference type="HAMAP" id="MF_00367">
    <property type="entry name" value="GTPase_Era"/>
    <property type="match status" value="1"/>
</dbReference>
<dbReference type="InterPro" id="IPR030388">
    <property type="entry name" value="G_ERA_dom"/>
</dbReference>
<dbReference type="InterPro" id="IPR006073">
    <property type="entry name" value="GTP-bd"/>
</dbReference>
<dbReference type="InterPro" id="IPR005662">
    <property type="entry name" value="GTPase_Era-like"/>
</dbReference>
<dbReference type="InterPro" id="IPR015946">
    <property type="entry name" value="KH_dom-like_a/b"/>
</dbReference>
<dbReference type="InterPro" id="IPR004044">
    <property type="entry name" value="KH_dom_type_2"/>
</dbReference>
<dbReference type="InterPro" id="IPR009019">
    <property type="entry name" value="KH_sf_prok-type"/>
</dbReference>
<dbReference type="InterPro" id="IPR027417">
    <property type="entry name" value="P-loop_NTPase"/>
</dbReference>
<dbReference type="InterPro" id="IPR005225">
    <property type="entry name" value="Small_GTP-bd"/>
</dbReference>
<dbReference type="NCBIfam" id="TIGR00436">
    <property type="entry name" value="era"/>
    <property type="match status" value="1"/>
</dbReference>
<dbReference type="NCBIfam" id="NF000908">
    <property type="entry name" value="PRK00089.1"/>
    <property type="match status" value="1"/>
</dbReference>
<dbReference type="NCBIfam" id="TIGR00231">
    <property type="entry name" value="small_GTP"/>
    <property type="match status" value="1"/>
</dbReference>
<dbReference type="PANTHER" id="PTHR42698">
    <property type="entry name" value="GTPASE ERA"/>
    <property type="match status" value="1"/>
</dbReference>
<dbReference type="PANTHER" id="PTHR42698:SF1">
    <property type="entry name" value="GTPASE ERA, MITOCHONDRIAL"/>
    <property type="match status" value="1"/>
</dbReference>
<dbReference type="Pfam" id="PF07650">
    <property type="entry name" value="KH_2"/>
    <property type="match status" value="1"/>
</dbReference>
<dbReference type="Pfam" id="PF01926">
    <property type="entry name" value="MMR_HSR1"/>
    <property type="match status" value="1"/>
</dbReference>
<dbReference type="SUPFAM" id="SSF52540">
    <property type="entry name" value="P-loop containing nucleoside triphosphate hydrolases"/>
    <property type="match status" value="1"/>
</dbReference>
<dbReference type="SUPFAM" id="SSF54814">
    <property type="entry name" value="Prokaryotic type KH domain (KH-domain type II)"/>
    <property type="match status" value="1"/>
</dbReference>
<dbReference type="PROSITE" id="PS51713">
    <property type="entry name" value="G_ERA"/>
    <property type="match status" value="1"/>
</dbReference>
<dbReference type="PROSITE" id="PS50823">
    <property type="entry name" value="KH_TYPE_2"/>
    <property type="match status" value="1"/>
</dbReference>
<feature type="chain" id="PRO_0000180055" description="GTPase Era">
    <location>
        <begin position="1"/>
        <end position="317"/>
    </location>
</feature>
<feature type="domain" description="Era-type G" evidence="2">
    <location>
        <begin position="17"/>
        <end position="190"/>
    </location>
</feature>
<feature type="domain" description="KH type-2" evidence="1">
    <location>
        <begin position="221"/>
        <end position="303"/>
    </location>
</feature>
<feature type="region of interest" description="G1" evidence="2">
    <location>
        <begin position="25"/>
        <end position="32"/>
    </location>
</feature>
<feature type="region of interest" description="G2" evidence="2">
    <location>
        <begin position="51"/>
        <end position="55"/>
    </location>
</feature>
<feature type="region of interest" description="G3" evidence="2">
    <location>
        <begin position="72"/>
        <end position="75"/>
    </location>
</feature>
<feature type="region of interest" description="G4" evidence="2">
    <location>
        <begin position="135"/>
        <end position="138"/>
    </location>
</feature>
<feature type="region of interest" description="G5" evidence="2">
    <location>
        <begin position="169"/>
        <end position="171"/>
    </location>
</feature>
<feature type="binding site" evidence="1">
    <location>
        <begin position="25"/>
        <end position="32"/>
    </location>
    <ligand>
        <name>GTP</name>
        <dbReference type="ChEBI" id="CHEBI:37565"/>
    </ligand>
</feature>
<feature type="binding site" evidence="1">
    <location>
        <begin position="72"/>
        <end position="76"/>
    </location>
    <ligand>
        <name>GTP</name>
        <dbReference type="ChEBI" id="CHEBI:37565"/>
    </ligand>
</feature>
<feature type="binding site" evidence="1">
    <location>
        <begin position="135"/>
        <end position="138"/>
    </location>
    <ligand>
        <name>GTP</name>
        <dbReference type="ChEBI" id="CHEBI:37565"/>
    </ligand>
</feature>
<proteinExistence type="inferred from homology"/>
<accession>Q9RDF2</accession>
<gene>
    <name evidence="1" type="primary">era</name>
    <name type="ordered locus">SCO2539</name>
    <name type="ORF">SCC77.06</name>
</gene>
<organism>
    <name type="scientific">Streptomyces coelicolor (strain ATCC BAA-471 / A3(2) / M145)</name>
    <dbReference type="NCBI Taxonomy" id="100226"/>
    <lineage>
        <taxon>Bacteria</taxon>
        <taxon>Bacillati</taxon>
        <taxon>Actinomycetota</taxon>
        <taxon>Actinomycetes</taxon>
        <taxon>Kitasatosporales</taxon>
        <taxon>Streptomycetaceae</taxon>
        <taxon>Streptomyces</taxon>
        <taxon>Streptomyces albidoflavus group</taxon>
    </lineage>
</organism>
<reference key="1">
    <citation type="journal article" date="2002" name="Nature">
        <title>Complete genome sequence of the model actinomycete Streptomyces coelicolor A3(2).</title>
        <authorList>
            <person name="Bentley S.D."/>
            <person name="Chater K.F."/>
            <person name="Cerdeno-Tarraga A.-M."/>
            <person name="Challis G.L."/>
            <person name="Thomson N.R."/>
            <person name="James K.D."/>
            <person name="Harris D.E."/>
            <person name="Quail M.A."/>
            <person name="Kieser H."/>
            <person name="Harper D."/>
            <person name="Bateman A."/>
            <person name="Brown S."/>
            <person name="Chandra G."/>
            <person name="Chen C.W."/>
            <person name="Collins M."/>
            <person name="Cronin A."/>
            <person name="Fraser A."/>
            <person name="Goble A."/>
            <person name="Hidalgo J."/>
            <person name="Hornsby T."/>
            <person name="Howarth S."/>
            <person name="Huang C.-H."/>
            <person name="Kieser T."/>
            <person name="Larke L."/>
            <person name="Murphy L.D."/>
            <person name="Oliver K."/>
            <person name="O'Neil S."/>
            <person name="Rabbinowitsch E."/>
            <person name="Rajandream M.A."/>
            <person name="Rutherford K.M."/>
            <person name="Rutter S."/>
            <person name="Seeger K."/>
            <person name="Saunders D."/>
            <person name="Sharp S."/>
            <person name="Squares R."/>
            <person name="Squares S."/>
            <person name="Taylor K."/>
            <person name="Warren T."/>
            <person name="Wietzorrek A."/>
            <person name="Woodward J.R."/>
            <person name="Barrell B.G."/>
            <person name="Parkhill J."/>
            <person name="Hopwood D.A."/>
        </authorList>
    </citation>
    <scope>NUCLEOTIDE SEQUENCE [LARGE SCALE GENOMIC DNA]</scope>
    <source>
        <strain>ATCC BAA-471 / A3(2) / M145</strain>
    </source>
</reference>